<keyword id="KW-0066">ATP synthesis</keyword>
<keyword id="KW-1003">Cell membrane</keyword>
<keyword id="KW-0139">CF(1)</keyword>
<keyword id="KW-0375">Hydrogen ion transport</keyword>
<keyword id="KW-0406">Ion transport</keyword>
<keyword id="KW-0472">Membrane</keyword>
<keyword id="KW-1185">Reference proteome</keyword>
<keyword id="KW-0813">Transport</keyword>
<organism>
    <name type="scientific">Clostridium botulinum (strain Hall / ATCC 3502 / NCTC 13319 / Type A)</name>
    <dbReference type="NCBI Taxonomy" id="441771"/>
    <lineage>
        <taxon>Bacteria</taxon>
        <taxon>Bacillati</taxon>
        <taxon>Bacillota</taxon>
        <taxon>Clostridia</taxon>
        <taxon>Eubacteriales</taxon>
        <taxon>Clostridiaceae</taxon>
        <taxon>Clostridium</taxon>
    </lineage>
</organism>
<reference key="1">
    <citation type="journal article" date="2007" name="Genome Res.">
        <title>Genome sequence of a proteolytic (Group I) Clostridium botulinum strain Hall A and comparative analysis of the clostridial genomes.</title>
        <authorList>
            <person name="Sebaihia M."/>
            <person name="Peck M.W."/>
            <person name="Minton N.P."/>
            <person name="Thomson N.R."/>
            <person name="Holden M.T.G."/>
            <person name="Mitchell W.J."/>
            <person name="Carter A.T."/>
            <person name="Bentley S.D."/>
            <person name="Mason D.R."/>
            <person name="Crossman L."/>
            <person name="Paul C.J."/>
            <person name="Ivens A."/>
            <person name="Wells-Bennik M.H.J."/>
            <person name="Davis I.J."/>
            <person name="Cerdeno-Tarraga A.M."/>
            <person name="Churcher C."/>
            <person name="Quail M.A."/>
            <person name="Chillingworth T."/>
            <person name="Feltwell T."/>
            <person name="Fraser A."/>
            <person name="Goodhead I."/>
            <person name="Hance Z."/>
            <person name="Jagels K."/>
            <person name="Larke N."/>
            <person name="Maddison M."/>
            <person name="Moule S."/>
            <person name="Mungall K."/>
            <person name="Norbertczak H."/>
            <person name="Rabbinowitsch E."/>
            <person name="Sanders M."/>
            <person name="Simmonds M."/>
            <person name="White B."/>
            <person name="Whithead S."/>
            <person name="Parkhill J."/>
        </authorList>
    </citation>
    <scope>NUCLEOTIDE SEQUENCE [LARGE SCALE GENOMIC DNA]</scope>
    <source>
        <strain>Hall / ATCC 3502 / NCTC 13319 / Type A</strain>
    </source>
</reference>
<reference key="2">
    <citation type="journal article" date="2007" name="PLoS ONE">
        <title>Analysis of the neurotoxin complex genes in Clostridium botulinum A1-A4 and B1 strains: BoNT/A3, /Ba4 and /B1 clusters are located within plasmids.</title>
        <authorList>
            <person name="Smith T.J."/>
            <person name="Hill K.K."/>
            <person name="Foley B.T."/>
            <person name="Detter J.C."/>
            <person name="Munk A.C."/>
            <person name="Bruce D.C."/>
            <person name="Doggett N.A."/>
            <person name="Smith L.A."/>
            <person name="Marks J.D."/>
            <person name="Xie G."/>
            <person name="Brettin T.S."/>
        </authorList>
    </citation>
    <scope>NUCLEOTIDE SEQUENCE [LARGE SCALE GENOMIC DNA]</scope>
    <source>
        <strain>Hall / ATCC 3502 / NCTC 13319 / Type A</strain>
    </source>
</reference>
<name>ATPD_CLOBH</name>
<protein>
    <recommendedName>
        <fullName evidence="1">ATP synthase subunit delta</fullName>
    </recommendedName>
    <alternativeName>
        <fullName evidence="1">ATP synthase F(1) sector subunit delta</fullName>
    </alternativeName>
    <alternativeName>
        <fullName evidence="1">F-type ATPase subunit delta</fullName>
        <shortName evidence="1">F-ATPase subunit delta</shortName>
    </alternativeName>
</protein>
<proteinExistence type="inferred from homology"/>
<evidence type="ECO:0000255" key="1">
    <source>
        <dbReference type="HAMAP-Rule" id="MF_01416"/>
    </source>
</evidence>
<gene>
    <name evidence="1" type="primary">atpH</name>
    <name type="ordered locus">CBO0153</name>
    <name type="ordered locus">CLC_0201</name>
</gene>
<accession>A5HY49</accession>
<accession>A7G069</accession>
<sequence>MYEYLDRRYALALYEVAEENNKVDEYLRDLKEVVNIIKNSEDICKILKHPEINTSRKKEIFTELFKDKVDDKILSFLLVLIEKDRILYLEEKLKEMEKIYLEKNNMILANIKTVIPLLKEEREELIEKLGNKYNKKIILEEEIDKSIIGGVYVRVGDDVLDGTLSTRLKDIKKMMLKRE</sequence>
<feature type="chain" id="PRO_1000184672" description="ATP synthase subunit delta">
    <location>
        <begin position="1"/>
        <end position="179"/>
    </location>
</feature>
<comment type="function">
    <text evidence="1">F(1)F(0) ATP synthase produces ATP from ADP in the presence of a proton or sodium gradient. F-type ATPases consist of two structural domains, F(1) containing the extramembraneous catalytic core and F(0) containing the membrane proton channel, linked together by a central stalk and a peripheral stalk. During catalysis, ATP synthesis in the catalytic domain of F(1) is coupled via a rotary mechanism of the central stalk subunits to proton translocation.</text>
</comment>
<comment type="function">
    <text evidence="1">This protein is part of the stalk that links CF(0) to CF(1). It either transmits conformational changes from CF(0) to CF(1) or is implicated in proton conduction.</text>
</comment>
<comment type="subunit">
    <text evidence="1">F-type ATPases have 2 components, F(1) - the catalytic core - and F(0) - the membrane proton channel. F(1) has five subunits: alpha(3), beta(3), gamma(1), delta(1), epsilon(1). F(0) has three main subunits: a(1), b(2) and c(10-14). The alpha and beta chains form an alternating ring which encloses part of the gamma chain. F(1) is attached to F(0) by a central stalk formed by the gamma and epsilon chains, while a peripheral stalk is formed by the delta and b chains.</text>
</comment>
<comment type="subcellular location">
    <subcellularLocation>
        <location evidence="1">Cell membrane</location>
        <topology evidence="1">Peripheral membrane protein</topology>
    </subcellularLocation>
</comment>
<comment type="similarity">
    <text evidence="1">Belongs to the ATPase delta chain family.</text>
</comment>
<dbReference type="EMBL" id="CP000727">
    <property type="protein sequence ID" value="ABS38750.1"/>
    <property type="molecule type" value="Genomic_DNA"/>
</dbReference>
<dbReference type="EMBL" id="AM412317">
    <property type="protein sequence ID" value="CAL81708.1"/>
    <property type="molecule type" value="Genomic_DNA"/>
</dbReference>
<dbReference type="RefSeq" id="WP_011947988.1">
    <property type="nucleotide sequence ID" value="NC_009698.1"/>
</dbReference>
<dbReference type="RefSeq" id="YP_001252700.1">
    <property type="nucleotide sequence ID" value="NC_009495.1"/>
</dbReference>
<dbReference type="RefSeq" id="YP_001386112.1">
    <property type="nucleotide sequence ID" value="NC_009698.1"/>
</dbReference>
<dbReference type="SMR" id="A5HY49"/>
<dbReference type="GeneID" id="5184408"/>
<dbReference type="KEGG" id="cbh:CLC_0201"/>
<dbReference type="KEGG" id="cbo:CBO0153"/>
<dbReference type="PATRIC" id="fig|413999.7.peg.152"/>
<dbReference type="HOGENOM" id="CLU_085114_4_0_9"/>
<dbReference type="PRO" id="PR:A5HY49"/>
<dbReference type="Proteomes" id="UP000001986">
    <property type="component" value="Chromosome"/>
</dbReference>
<dbReference type="GO" id="GO:0005886">
    <property type="term" value="C:plasma membrane"/>
    <property type="evidence" value="ECO:0007669"/>
    <property type="project" value="UniProtKB-SubCell"/>
</dbReference>
<dbReference type="GO" id="GO:0045259">
    <property type="term" value="C:proton-transporting ATP synthase complex"/>
    <property type="evidence" value="ECO:0007669"/>
    <property type="project" value="UniProtKB-KW"/>
</dbReference>
<dbReference type="GO" id="GO:0046933">
    <property type="term" value="F:proton-transporting ATP synthase activity, rotational mechanism"/>
    <property type="evidence" value="ECO:0007669"/>
    <property type="project" value="UniProtKB-UniRule"/>
</dbReference>
<dbReference type="GO" id="GO:0015986">
    <property type="term" value="P:proton motive force-driven ATP synthesis"/>
    <property type="evidence" value="ECO:0000318"/>
    <property type="project" value="GO_Central"/>
</dbReference>
<dbReference type="Gene3D" id="1.10.520.20">
    <property type="entry name" value="N-terminal domain of the delta subunit of the F1F0-ATP synthase"/>
    <property type="match status" value="1"/>
</dbReference>
<dbReference type="HAMAP" id="MF_01416">
    <property type="entry name" value="ATP_synth_delta_bact"/>
    <property type="match status" value="1"/>
</dbReference>
<dbReference type="InterPro" id="IPR026015">
    <property type="entry name" value="ATP_synth_OSCP/delta_N_sf"/>
</dbReference>
<dbReference type="InterPro" id="IPR020781">
    <property type="entry name" value="ATPase_OSCP/d_CS"/>
</dbReference>
<dbReference type="InterPro" id="IPR000711">
    <property type="entry name" value="ATPase_OSCP/dsu"/>
</dbReference>
<dbReference type="NCBIfam" id="TIGR01145">
    <property type="entry name" value="ATP_synt_delta"/>
    <property type="match status" value="1"/>
</dbReference>
<dbReference type="NCBIfam" id="NF004403">
    <property type="entry name" value="PRK05758.2-4"/>
    <property type="match status" value="1"/>
</dbReference>
<dbReference type="PANTHER" id="PTHR11910">
    <property type="entry name" value="ATP SYNTHASE DELTA CHAIN"/>
    <property type="match status" value="1"/>
</dbReference>
<dbReference type="Pfam" id="PF00213">
    <property type="entry name" value="OSCP"/>
    <property type="match status" value="1"/>
</dbReference>
<dbReference type="PRINTS" id="PR00125">
    <property type="entry name" value="ATPASEDELTA"/>
</dbReference>
<dbReference type="SUPFAM" id="SSF47928">
    <property type="entry name" value="N-terminal domain of the delta subunit of the F1F0-ATP synthase"/>
    <property type="match status" value="1"/>
</dbReference>
<dbReference type="SUPFAM" id="SSF160527">
    <property type="entry name" value="V-type ATPase subunit E-like"/>
    <property type="match status" value="1"/>
</dbReference>
<dbReference type="PROSITE" id="PS00389">
    <property type="entry name" value="ATPASE_DELTA"/>
    <property type="match status" value="1"/>
</dbReference>